<dbReference type="EC" id="7.4.2.8" evidence="1"/>
<dbReference type="EMBL" id="CP000825">
    <property type="protein sequence ID" value="ABV51526.1"/>
    <property type="molecule type" value="Genomic_DNA"/>
</dbReference>
<dbReference type="RefSeq" id="WP_012008518.1">
    <property type="nucleotide sequence ID" value="NC_009840.1"/>
</dbReference>
<dbReference type="SMR" id="A8G7E5"/>
<dbReference type="STRING" id="93060.P9215_19131"/>
<dbReference type="KEGG" id="pmh:P9215_19131"/>
<dbReference type="eggNOG" id="COG0653">
    <property type="taxonomic scope" value="Bacteria"/>
</dbReference>
<dbReference type="HOGENOM" id="CLU_005314_3_0_3"/>
<dbReference type="OrthoDB" id="9805579at2"/>
<dbReference type="Proteomes" id="UP000002014">
    <property type="component" value="Chromosome"/>
</dbReference>
<dbReference type="GO" id="GO:0031522">
    <property type="term" value="C:cell envelope Sec protein transport complex"/>
    <property type="evidence" value="ECO:0007669"/>
    <property type="project" value="TreeGrafter"/>
</dbReference>
<dbReference type="GO" id="GO:0005829">
    <property type="term" value="C:cytosol"/>
    <property type="evidence" value="ECO:0007669"/>
    <property type="project" value="TreeGrafter"/>
</dbReference>
<dbReference type="GO" id="GO:0031676">
    <property type="term" value="C:plasma membrane-derived thylakoid membrane"/>
    <property type="evidence" value="ECO:0007669"/>
    <property type="project" value="UniProtKB-SubCell"/>
</dbReference>
<dbReference type="GO" id="GO:0005524">
    <property type="term" value="F:ATP binding"/>
    <property type="evidence" value="ECO:0007669"/>
    <property type="project" value="UniProtKB-UniRule"/>
</dbReference>
<dbReference type="GO" id="GO:0008564">
    <property type="term" value="F:protein-exporting ATPase activity"/>
    <property type="evidence" value="ECO:0007669"/>
    <property type="project" value="UniProtKB-EC"/>
</dbReference>
<dbReference type="GO" id="GO:0065002">
    <property type="term" value="P:intracellular protein transmembrane transport"/>
    <property type="evidence" value="ECO:0007669"/>
    <property type="project" value="UniProtKB-UniRule"/>
</dbReference>
<dbReference type="GO" id="GO:0017038">
    <property type="term" value="P:protein import"/>
    <property type="evidence" value="ECO:0007669"/>
    <property type="project" value="InterPro"/>
</dbReference>
<dbReference type="GO" id="GO:0006605">
    <property type="term" value="P:protein targeting"/>
    <property type="evidence" value="ECO:0007669"/>
    <property type="project" value="UniProtKB-UniRule"/>
</dbReference>
<dbReference type="GO" id="GO:0043952">
    <property type="term" value="P:protein transport by the Sec complex"/>
    <property type="evidence" value="ECO:0007669"/>
    <property type="project" value="TreeGrafter"/>
</dbReference>
<dbReference type="CDD" id="cd17928">
    <property type="entry name" value="DEXDc_SecA"/>
    <property type="match status" value="1"/>
</dbReference>
<dbReference type="CDD" id="cd18803">
    <property type="entry name" value="SF2_C_secA"/>
    <property type="match status" value="1"/>
</dbReference>
<dbReference type="FunFam" id="3.90.1440.10:FF:000003">
    <property type="entry name" value="Preprotein translocase SecA subunit"/>
    <property type="match status" value="1"/>
</dbReference>
<dbReference type="FunFam" id="3.40.50.300:FF:000429">
    <property type="entry name" value="Preprotein translocase subunit SecA"/>
    <property type="match status" value="1"/>
</dbReference>
<dbReference type="FunFam" id="1.10.3060.10:FF:000003">
    <property type="entry name" value="Protein translocase subunit SecA"/>
    <property type="match status" value="1"/>
</dbReference>
<dbReference type="FunFam" id="3.40.50.300:FF:000334">
    <property type="entry name" value="Protein translocase subunit SecA"/>
    <property type="match status" value="1"/>
</dbReference>
<dbReference type="Gene3D" id="1.10.3060.10">
    <property type="entry name" value="Helical scaffold and wing domains of SecA"/>
    <property type="match status" value="1"/>
</dbReference>
<dbReference type="Gene3D" id="3.40.50.300">
    <property type="entry name" value="P-loop containing nucleotide triphosphate hydrolases"/>
    <property type="match status" value="2"/>
</dbReference>
<dbReference type="Gene3D" id="3.90.1440.10">
    <property type="entry name" value="SecA, preprotein cross-linking domain"/>
    <property type="match status" value="1"/>
</dbReference>
<dbReference type="HAMAP" id="MF_01382">
    <property type="entry name" value="SecA"/>
    <property type="match status" value="1"/>
</dbReference>
<dbReference type="InterPro" id="IPR014001">
    <property type="entry name" value="Helicase_ATP-bd"/>
</dbReference>
<dbReference type="InterPro" id="IPR027417">
    <property type="entry name" value="P-loop_NTPase"/>
</dbReference>
<dbReference type="InterPro" id="IPR000185">
    <property type="entry name" value="SecA"/>
</dbReference>
<dbReference type="InterPro" id="IPR020937">
    <property type="entry name" value="SecA_CS"/>
</dbReference>
<dbReference type="InterPro" id="IPR011115">
    <property type="entry name" value="SecA_DEAD"/>
</dbReference>
<dbReference type="InterPro" id="IPR014018">
    <property type="entry name" value="SecA_motor_DEAD"/>
</dbReference>
<dbReference type="InterPro" id="IPR011130">
    <property type="entry name" value="SecA_preprotein_X-link_dom"/>
</dbReference>
<dbReference type="InterPro" id="IPR044722">
    <property type="entry name" value="SecA_SF2_C"/>
</dbReference>
<dbReference type="InterPro" id="IPR011116">
    <property type="entry name" value="SecA_Wing/Scaffold"/>
</dbReference>
<dbReference type="InterPro" id="IPR036266">
    <property type="entry name" value="SecA_Wing/Scaffold_sf"/>
</dbReference>
<dbReference type="InterPro" id="IPR036670">
    <property type="entry name" value="SecA_X-link_sf"/>
</dbReference>
<dbReference type="NCBIfam" id="TIGR00963">
    <property type="entry name" value="secA"/>
    <property type="match status" value="1"/>
</dbReference>
<dbReference type="PANTHER" id="PTHR30612:SF0">
    <property type="entry name" value="CHLOROPLAST PROTEIN-TRANSPORTING ATPASE"/>
    <property type="match status" value="1"/>
</dbReference>
<dbReference type="PANTHER" id="PTHR30612">
    <property type="entry name" value="SECA INNER MEMBRANE COMPONENT OF SEC PROTEIN SECRETION SYSTEM"/>
    <property type="match status" value="1"/>
</dbReference>
<dbReference type="Pfam" id="PF21090">
    <property type="entry name" value="P-loop_SecA"/>
    <property type="match status" value="1"/>
</dbReference>
<dbReference type="Pfam" id="PF07517">
    <property type="entry name" value="SecA_DEAD"/>
    <property type="match status" value="1"/>
</dbReference>
<dbReference type="Pfam" id="PF01043">
    <property type="entry name" value="SecA_PP_bind"/>
    <property type="match status" value="1"/>
</dbReference>
<dbReference type="Pfam" id="PF07516">
    <property type="entry name" value="SecA_SW"/>
    <property type="match status" value="1"/>
</dbReference>
<dbReference type="PRINTS" id="PR00906">
    <property type="entry name" value="SECA"/>
</dbReference>
<dbReference type="SMART" id="SM00957">
    <property type="entry name" value="SecA_DEAD"/>
    <property type="match status" value="1"/>
</dbReference>
<dbReference type="SMART" id="SM00958">
    <property type="entry name" value="SecA_PP_bind"/>
    <property type="match status" value="1"/>
</dbReference>
<dbReference type="SUPFAM" id="SSF81886">
    <property type="entry name" value="Helical scaffold and wing domains of SecA"/>
    <property type="match status" value="1"/>
</dbReference>
<dbReference type="SUPFAM" id="SSF52540">
    <property type="entry name" value="P-loop containing nucleoside triphosphate hydrolases"/>
    <property type="match status" value="2"/>
</dbReference>
<dbReference type="SUPFAM" id="SSF81767">
    <property type="entry name" value="Pre-protein crosslinking domain of SecA"/>
    <property type="match status" value="1"/>
</dbReference>
<dbReference type="PROSITE" id="PS01312">
    <property type="entry name" value="SECA"/>
    <property type="match status" value="1"/>
</dbReference>
<dbReference type="PROSITE" id="PS51196">
    <property type="entry name" value="SECA_MOTOR_DEAD"/>
    <property type="match status" value="1"/>
</dbReference>
<protein>
    <recommendedName>
        <fullName evidence="1">Protein translocase subunit SecA</fullName>
        <ecNumber evidence="1">7.4.2.8</ecNumber>
    </recommendedName>
</protein>
<comment type="function">
    <text evidence="1">Part of the Sec protein translocase complex. Interacts with the SecYEG preprotein conducting channel. Has a central role in coupling the hydrolysis of ATP to the transfer of proteins into and across the cell membrane, serving as an ATP-driven molecular motor driving the stepwise translocation of polypeptide chains across the membrane.</text>
</comment>
<comment type="function">
    <text evidence="1">Probably participates in protein translocation into and across both the cytoplasmic and thylakoid membranes in cyanobacterial cells.</text>
</comment>
<comment type="catalytic activity">
    <reaction evidence="1">
        <text>ATP + H2O + cellular proteinSide 1 = ADP + phosphate + cellular proteinSide 2.</text>
        <dbReference type="EC" id="7.4.2.8"/>
    </reaction>
</comment>
<comment type="subunit">
    <text evidence="1">Monomer and homodimer. Part of the essential Sec protein translocation apparatus which comprises SecA, SecYEG and auxiliary proteins SecDF. Other proteins may also be involved.</text>
</comment>
<comment type="subcellular location">
    <subcellularLocation>
        <location evidence="1">Cell inner membrane</location>
        <topology evidence="1">Peripheral membrane protein</topology>
        <orientation evidence="1">Cytoplasmic side</orientation>
    </subcellularLocation>
    <subcellularLocation>
        <location evidence="1">Cellular thylakoid membrane</location>
        <topology evidence="1">Peripheral membrane protein</topology>
        <orientation evidence="1">Cytoplasmic side</orientation>
    </subcellularLocation>
    <subcellularLocation>
        <location evidence="1">Cytoplasm</location>
    </subcellularLocation>
</comment>
<comment type="similarity">
    <text evidence="1">Belongs to the SecA family.</text>
</comment>
<gene>
    <name evidence="1" type="primary">secA</name>
    <name type="ordered locus">P9215_19131</name>
</gene>
<organism>
    <name type="scientific">Prochlorococcus marinus (strain MIT 9215)</name>
    <dbReference type="NCBI Taxonomy" id="93060"/>
    <lineage>
        <taxon>Bacteria</taxon>
        <taxon>Bacillati</taxon>
        <taxon>Cyanobacteriota</taxon>
        <taxon>Cyanophyceae</taxon>
        <taxon>Synechococcales</taxon>
        <taxon>Prochlorococcaceae</taxon>
        <taxon>Prochlorococcus</taxon>
    </lineage>
</organism>
<proteinExistence type="inferred from homology"/>
<keyword id="KW-0067">ATP-binding</keyword>
<keyword id="KW-0997">Cell inner membrane</keyword>
<keyword id="KW-1003">Cell membrane</keyword>
<keyword id="KW-0963">Cytoplasm</keyword>
<keyword id="KW-0472">Membrane</keyword>
<keyword id="KW-0547">Nucleotide-binding</keyword>
<keyword id="KW-0653">Protein transport</keyword>
<keyword id="KW-0793">Thylakoid</keyword>
<keyword id="KW-1278">Translocase</keyword>
<keyword id="KW-0811">Translocation</keyword>
<keyword id="KW-0813">Transport</keyword>
<feature type="chain" id="PRO_0000318405" description="Protein translocase subunit SecA">
    <location>
        <begin position="1"/>
        <end position="943"/>
    </location>
</feature>
<feature type="region of interest" description="Disordered" evidence="2">
    <location>
        <begin position="535"/>
        <end position="564"/>
    </location>
</feature>
<feature type="binding site" evidence="1">
    <location>
        <position position="90"/>
    </location>
    <ligand>
        <name>ATP</name>
        <dbReference type="ChEBI" id="CHEBI:30616"/>
    </ligand>
</feature>
<feature type="binding site" evidence="1">
    <location>
        <begin position="108"/>
        <end position="112"/>
    </location>
    <ligand>
        <name>ATP</name>
        <dbReference type="ChEBI" id="CHEBI:30616"/>
    </ligand>
</feature>
<feature type="binding site" evidence="1">
    <location>
        <position position="509"/>
    </location>
    <ligand>
        <name>ATP</name>
        <dbReference type="ChEBI" id="CHEBI:30616"/>
    </ligand>
</feature>
<evidence type="ECO:0000255" key="1">
    <source>
        <dbReference type="HAMAP-Rule" id="MF_01382"/>
    </source>
</evidence>
<evidence type="ECO:0000256" key="2">
    <source>
        <dbReference type="SAM" id="MobiDB-lite"/>
    </source>
</evidence>
<reference key="1">
    <citation type="journal article" date="2007" name="PLoS Genet.">
        <title>Patterns and implications of gene gain and loss in the evolution of Prochlorococcus.</title>
        <authorList>
            <person name="Kettler G.C."/>
            <person name="Martiny A.C."/>
            <person name="Huang K."/>
            <person name="Zucker J."/>
            <person name="Coleman M.L."/>
            <person name="Rodrigue S."/>
            <person name="Chen F."/>
            <person name="Lapidus A."/>
            <person name="Ferriera S."/>
            <person name="Johnson J."/>
            <person name="Steglich C."/>
            <person name="Church G.M."/>
            <person name="Richardson P."/>
            <person name="Chisholm S.W."/>
        </authorList>
    </citation>
    <scope>NUCLEOTIDE SEQUENCE [LARGE SCALE GENOMIC DNA]</scope>
    <source>
        <strain>MIT 9215</strain>
    </source>
</reference>
<accession>A8G7E5</accession>
<name>SECA_PROM2</name>
<sequence length="943" mass="108211">MLKLLFGDPNTRKLKRYQPIVEEINFLEEEISQLTDDDLRKETQNLKSKISSELDFKKQKELLEEFLPKAFAIVREASKRVLDMRHFDVQLIGGMVLHECQIAEMKTGEGKTLVATLPCYLNALTGKGVHVVTVNDYLARRDAEWMGQVHRFLGLSVGLIQQDMNPVERKKNYDCDITYATNSELGFDYLRDNMATDVNEVVQRKFNYCVIDEVDSILIDEARTPLIISGQVERPQEKYQKAAQLSLKLVKAKELSKDGIDPEGDYEVDEKQRSCILTDQGFAKCEEYLGVNDLYNPKDPWAHYITNALKAKELFIKDVNYIIKNNEAVIVDEFTGRVMPGRRWSDGQHQAIEAKESLQIQPETQTLASITYQNFFLLYPGLAGMTGTAKTEEVEFEKTYKLESTVIPTNQLRKRKDWSDQVFKTEIGKWKAVAKETANIHRDGRPVLVGTTSVEKSELLSSLLSEEKIPHNLLNAKPENVEREAEIVAQAGRAGAVTIATNMAGRGTDIILGGNSDYMARLKLKEILIPLLVKPDNEHKPPIPKQRNSKSKGGFSKKASSKLKKNISNSSTSLFPCKLDEAIEKQLSLLSDELVKNWGDRQLSVLELDDRIATAAEKAPTDDDLIKLLRESLSAVKKEYEKVLTHEEEKVRKAGGLHVIGTERHESRRVDNQLRGRAGRQGDLGSTRFFLSLEDNLLRIFGGDRVANLMNAFRVDEDMPIESGMLTRSLESAQKKVETYYYDIRKQVFEYDEVMNNQRKAVYGERLRVLKGNDLKRQVIGYGERTMSEIVDAYINPDLPPEEWNIDQLISKVKEFIYLLDDLKSEDINLLSIEELKNYLQEQLRIAYDLKESQIEKIRPGLMREAERFFILQQIDNLWREHLQSMDSLRESVGLRGYGQKDPLIEYKNEGYDMFLEMMTNMRRNVIYSMFMFQPKTEVNEKK</sequence>